<keyword id="KW-0535">Nitrogen fixation</keyword>
<name>NIFT_KLEPN</name>
<feature type="chain" id="PRO_0000096826" description="Protein NifT">
    <location>
        <begin position="1"/>
        <end position="72"/>
    </location>
</feature>
<proteinExistence type="predicted"/>
<protein>
    <recommendedName>
        <fullName>Protein NifT</fullName>
    </recommendedName>
</protein>
<dbReference type="EMBL" id="X13303">
    <property type="protein sequence ID" value="CAA31669.1"/>
    <property type="molecule type" value="Genomic_DNA"/>
</dbReference>
<dbReference type="EMBL" id="X07749">
    <property type="protein sequence ID" value="CAA30574.1"/>
    <property type="molecule type" value="Genomic_DNA"/>
</dbReference>
<dbReference type="EMBL" id="X12599">
    <property type="protein sequence ID" value="CAA31113.1"/>
    <property type="molecule type" value="Genomic_DNA"/>
</dbReference>
<dbReference type="EMBL" id="X06243">
    <property type="protein sequence ID" value="CAA29589.1"/>
    <property type="molecule type" value="Genomic_DNA"/>
</dbReference>
<dbReference type="PIR" id="S01837">
    <property type="entry name" value="S01837"/>
</dbReference>
<dbReference type="RefSeq" id="WP_004122392.1">
    <property type="nucleotide sequence ID" value="NZ_UKYP01000459.1"/>
</dbReference>
<dbReference type="SMR" id="P09134"/>
<dbReference type="GeneID" id="97394577"/>
<dbReference type="GO" id="GO:0009399">
    <property type="term" value="P:nitrogen fixation"/>
    <property type="evidence" value="ECO:0007669"/>
    <property type="project" value="UniProtKB-KW"/>
</dbReference>
<dbReference type="Gene3D" id="2.40.50.240">
    <property type="entry name" value="NifT/FixU-like"/>
    <property type="match status" value="1"/>
</dbReference>
<dbReference type="InterPro" id="IPR009727">
    <property type="entry name" value="NifT"/>
</dbReference>
<dbReference type="InterPro" id="IPR024044">
    <property type="entry name" value="NifT/FixU_barrel-like_dom_sf"/>
</dbReference>
<dbReference type="NCBIfam" id="TIGR02934">
    <property type="entry name" value="nifT_nitrog"/>
    <property type="match status" value="1"/>
</dbReference>
<dbReference type="Pfam" id="PF06988">
    <property type="entry name" value="NifT"/>
    <property type="match status" value="1"/>
</dbReference>
<dbReference type="SUPFAM" id="SSF159203">
    <property type="entry name" value="NifT/FixU-like"/>
    <property type="match status" value="1"/>
</dbReference>
<accession>P09134</accession>
<reference key="1">
    <citation type="journal article" date="1988" name="J. Mol. Biol.">
        <title>Nucleotide sequence of a 24,206-base-pair DNA fragment carrying the entire nitrogen fixation gene cluster of Klebsiella pneumoniae.</title>
        <authorList>
            <person name="Arnold W."/>
            <person name="Rump A."/>
            <person name="Klipp W."/>
            <person name="Priefer U.B."/>
            <person name="Puehler A."/>
        </authorList>
    </citation>
    <scope>NUCLEOTIDE SEQUENCE [GENOMIC DNA]</scope>
</reference>
<reference key="2">
    <citation type="journal article" date="1988" name="Nucleic Acids Res.">
        <title>The nucleotide sequence of the nifT, nifY, nifX and nifW genes of K. pneumoniae.</title>
        <authorList>
            <person name="Beynon J."/>
            <person name="Cannon M."/>
            <person name="Banan-Wollaston V."/>
            <person name="Ally A."/>
            <person name="Sutterquist R."/>
            <person name="Cannon F."/>
        </authorList>
    </citation>
    <scope>NUCLEOTIDE SEQUENCE [GENOMIC DNA]</scope>
</reference>
<reference key="3">
    <citation type="journal article" date="1988" name="Nucleic Acids Res.">
        <title>Nucleotide and deduced amino acid sequences of the Klebsiella pneumoniae nifK gene coding for the beta-subunit of nitrogenase MoFe protein.</title>
        <authorList>
            <person name="Steinbauer J."/>
            <person name="Wenzel W."/>
            <person name="Hess D."/>
        </authorList>
    </citation>
    <scope>NUCLEOTIDE SEQUENCE [GENOMIC DNA] OF 1-64</scope>
</reference>
<reference key="4">
    <citation type="journal article" date="1987" name="Biochem. J.">
        <title>A quantitative approach to sequence comparisons of nitrogenase MoFe protein alpha- and beta-subunits including the newly sequenced nifK gene from Klebsiella pneumoniae.</title>
        <authorList>
            <person name="Holland D."/>
            <person name="Zilberstein A."/>
            <person name="Zamir A."/>
            <person name="Sussman J.L."/>
        </authorList>
    </citation>
    <scope>NUCLEOTIDE SEQUENCE [GENOMIC DNA] OF 1-17</scope>
</reference>
<sequence>MPIVIFRERGADLYAYIAKQDLEARVIQIEHNDAERWGGAISLEGGRRYYVHPQPGRPVFPISLRATRNTLI</sequence>
<gene>
    <name type="primary">nifT</name>
</gene>
<organism>
    <name type="scientific">Klebsiella pneumoniae</name>
    <dbReference type="NCBI Taxonomy" id="573"/>
    <lineage>
        <taxon>Bacteria</taxon>
        <taxon>Pseudomonadati</taxon>
        <taxon>Pseudomonadota</taxon>
        <taxon>Gammaproteobacteria</taxon>
        <taxon>Enterobacterales</taxon>
        <taxon>Enterobacteriaceae</taxon>
        <taxon>Klebsiella/Raoultella group</taxon>
        <taxon>Klebsiella</taxon>
        <taxon>Klebsiella pneumoniae complex</taxon>
    </lineage>
</organism>